<gene>
    <name evidence="1" type="primary">efp</name>
    <name type="ordered locus">PCC8801_0547</name>
</gene>
<keyword id="KW-0963">Cytoplasm</keyword>
<keyword id="KW-0251">Elongation factor</keyword>
<keyword id="KW-0648">Protein biosynthesis</keyword>
<keyword id="KW-1185">Reference proteome</keyword>
<comment type="function">
    <text evidence="1">Involved in peptide bond synthesis. Stimulates efficient translation and peptide-bond synthesis on native or reconstituted 70S ribosomes in vitro. Probably functions indirectly by altering the affinity of the ribosome for aminoacyl-tRNA, thus increasing their reactivity as acceptors for peptidyl transferase.</text>
</comment>
<comment type="pathway">
    <text evidence="1">Protein biosynthesis; polypeptide chain elongation.</text>
</comment>
<comment type="subcellular location">
    <subcellularLocation>
        <location evidence="1">Cytoplasm</location>
    </subcellularLocation>
</comment>
<comment type="similarity">
    <text evidence="1">Belongs to the elongation factor P family.</text>
</comment>
<evidence type="ECO:0000255" key="1">
    <source>
        <dbReference type="HAMAP-Rule" id="MF_00141"/>
    </source>
</evidence>
<protein>
    <recommendedName>
        <fullName evidence="1">Elongation factor P</fullName>
        <shortName evidence="1">EF-P</shortName>
    </recommendedName>
</protein>
<dbReference type="EMBL" id="CP001287">
    <property type="protein sequence ID" value="ACK64638.1"/>
    <property type="molecule type" value="Genomic_DNA"/>
</dbReference>
<dbReference type="RefSeq" id="WP_012593915.1">
    <property type="nucleotide sequence ID" value="NC_011726.1"/>
</dbReference>
<dbReference type="SMR" id="B7JVR7"/>
<dbReference type="STRING" id="41431.PCC8801_0547"/>
<dbReference type="KEGG" id="cyp:PCC8801_0547"/>
<dbReference type="eggNOG" id="COG0231">
    <property type="taxonomic scope" value="Bacteria"/>
</dbReference>
<dbReference type="HOGENOM" id="CLU_074944_0_1_3"/>
<dbReference type="OrthoDB" id="9801844at2"/>
<dbReference type="UniPathway" id="UPA00345"/>
<dbReference type="Proteomes" id="UP000008204">
    <property type="component" value="Chromosome"/>
</dbReference>
<dbReference type="GO" id="GO:0005737">
    <property type="term" value="C:cytoplasm"/>
    <property type="evidence" value="ECO:0007669"/>
    <property type="project" value="UniProtKB-SubCell"/>
</dbReference>
<dbReference type="GO" id="GO:0003746">
    <property type="term" value="F:translation elongation factor activity"/>
    <property type="evidence" value="ECO:0007669"/>
    <property type="project" value="UniProtKB-UniRule"/>
</dbReference>
<dbReference type="GO" id="GO:0043043">
    <property type="term" value="P:peptide biosynthetic process"/>
    <property type="evidence" value="ECO:0007669"/>
    <property type="project" value="InterPro"/>
</dbReference>
<dbReference type="CDD" id="cd04470">
    <property type="entry name" value="S1_EF-P_repeat_1"/>
    <property type="match status" value="1"/>
</dbReference>
<dbReference type="CDD" id="cd05794">
    <property type="entry name" value="S1_EF-P_repeat_2"/>
    <property type="match status" value="1"/>
</dbReference>
<dbReference type="FunFam" id="2.30.30.30:FF:000003">
    <property type="entry name" value="Elongation factor P"/>
    <property type="match status" value="1"/>
</dbReference>
<dbReference type="FunFam" id="2.40.50.140:FF:000004">
    <property type="entry name" value="Elongation factor P"/>
    <property type="match status" value="1"/>
</dbReference>
<dbReference type="FunFam" id="2.40.50.140:FF:000009">
    <property type="entry name" value="Elongation factor P"/>
    <property type="match status" value="1"/>
</dbReference>
<dbReference type="Gene3D" id="2.30.30.30">
    <property type="match status" value="1"/>
</dbReference>
<dbReference type="Gene3D" id="2.40.50.140">
    <property type="entry name" value="Nucleic acid-binding proteins"/>
    <property type="match status" value="2"/>
</dbReference>
<dbReference type="HAMAP" id="MF_00141">
    <property type="entry name" value="EF_P"/>
    <property type="match status" value="1"/>
</dbReference>
<dbReference type="InterPro" id="IPR015365">
    <property type="entry name" value="Elong-fact-P_C"/>
</dbReference>
<dbReference type="InterPro" id="IPR012340">
    <property type="entry name" value="NA-bd_OB-fold"/>
</dbReference>
<dbReference type="InterPro" id="IPR014722">
    <property type="entry name" value="Rib_uL2_dom2"/>
</dbReference>
<dbReference type="InterPro" id="IPR020599">
    <property type="entry name" value="Transl_elong_fac_P/YeiP"/>
</dbReference>
<dbReference type="InterPro" id="IPR013185">
    <property type="entry name" value="Transl_elong_KOW-like"/>
</dbReference>
<dbReference type="InterPro" id="IPR001059">
    <property type="entry name" value="Transl_elong_P/YeiP_cen"/>
</dbReference>
<dbReference type="InterPro" id="IPR013852">
    <property type="entry name" value="Transl_elong_P/YeiP_CS"/>
</dbReference>
<dbReference type="InterPro" id="IPR011768">
    <property type="entry name" value="Transl_elongation_fac_P"/>
</dbReference>
<dbReference type="InterPro" id="IPR008991">
    <property type="entry name" value="Translation_prot_SH3-like_sf"/>
</dbReference>
<dbReference type="NCBIfam" id="TIGR00038">
    <property type="entry name" value="efp"/>
    <property type="match status" value="1"/>
</dbReference>
<dbReference type="NCBIfam" id="NF001810">
    <property type="entry name" value="PRK00529.1"/>
    <property type="match status" value="1"/>
</dbReference>
<dbReference type="PANTHER" id="PTHR30053">
    <property type="entry name" value="ELONGATION FACTOR P"/>
    <property type="match status" value="1"/>
</dbReference>
<dbReference type="PANTHER" id="PTHR30053:SF12">
    <property type="entry name" value="ELONGATION FACTOR P (EF-P) FAMILY PROTEIN"/>
    <property type="match status" value="1"/>
</dbReference>
<dbReference type="Pfam" id="PF01132">
    <property type="entry name" value="EFP"/>
    <property type="match status" value="1"/>
</dbReference>
<dbReference type="Pfam" id="PF08207">
    <property type="entry name" value="EFP_N"/>
    <property type="match status" value="1"/>
</dbReference>
<dbReference type="Pfam" id="PF09285">
    <property type="entry name" value="Elong-fact-P_C"/>
    <property type="match status" value="1"/>
</dbReference>
<dbReference type="PIRSF" id="PIRSF005901">
    <property type="entry name" value="EF-P"/>
    <property type="match status" value="1"/>
</dbReference>
<dbReference type="SMART" id="SM01185">
    <property type="entry name" value="EFP"/>
    <property type="match status" value="1"/>
</dbReference>
<dbReference type="SMART" id="SM00841">
    <property type="entry name" value="Elong-fact-P_C"/>
    <property type="match status" value="1"/>
</dbReference>
<dbReference type="SUPFAM" id="SSF50249">
    <property type="entry name" value="Nucleic acid-binding proteins"/>
    <property type="match status" value="2"/>
</dbReference>
<dbReference type="SUPFAM" id="SSF50104">
    <property type="entry name" value="Translation proteins SH3-like domain"/>
    <property type="match status" value="1"/>
</dbReference>
<dbReference type="PROSITE" id="PS01275">
    <property type="entry name" value="EFP"/>
    <property type="match status" value="1"/>
</dbReference>
<sequence length="185" mass="20516">MISSNDFRTGTTIELDGSVWRVVEFLHVKPGKGSAFVRTKLKNAQTGSVVEKTFRAGETVPQATLEKRTMQHTYKDGDQYVFMDMETYEEARLNPEQMGTSVNYLKEEMEADIVFWGDQVLEVQLPTSVILEVTETDPGVKGDTATGGTKPAIVETGAQVMVPLFISIGEKIKVDTRDGSYLGRE</sequence>
<proteinExistence type="inferred from homology"/>
<feature type="chain" id="PRO_1000117891" description="Elongation factor P">
    <location>
        <begin position="1"/>
        <end position="185"/>
    </location>
</feature>
<organism>
    <name type="scientific">Rippkaea orientalis (strain PCC 8801 / RF-1)</name>
    <name type="common">Cyanothece sp. (strain PCC 8801)</name>
    <dbReference type="NCBI Taxonomy" id="41431"/>
    <lineage>
        <taxon>Bacteria</taxon>
        <taxon>Bacillati</taxon>
        <taxon>Cyanobacteriota</taxon>
        <taxon>Cyanophyceae</taxon>
        <taxon>Oscillatoriophycideae</taxon>
        <taxon>Chroococcales</taxon>
        <taxon>Aphanothecaceae</taxon>
        <taxon>Rippkaea</taxon>
        <taxon>Rippkaea orientalis</taxon>
    </lineage>
</organism>
<reference key="1">
    <citation type="journal article" date="2011" name="MBio">
        <title>Novel metabolic attributes of the genus Cyanothece, comprising a group of unicellular nitrogen-fixing Cyanobacteria.</title>
        <authorList>
            <person name="Bandyopadhyay A."/>
            <person name="Elvitigala T."/>
            <person name="Welsh E."/>
            <person name="Stockel J."/>
            <person name="Liberton M."/>
            <person name="Min H."/>
            <person name="Sherman L.A."/>
            <person name="Pakrasi H.B."/>
        </authorList>
    </citation>
    <scope>NUCLEOTIDE SEQUENCE [LARGE SCALE GENOMIC DNA]</scope>
    <source>
        <strain>PCC 8801 / RF-1</strain>
    </source>
</reference>
<name>EFP_RIPO1</name>
<accession>B7JVR7</accession>